<gene>
    <name type="primary">Tmem132d</name>
    <name type="synonym">Molt</name>
</gene>
<feature type="signal peptide" evidence="2">
    <location>
        <begin position="1"/>
        <end position="30"/>
    </location>
</feature>
<feature type="chain" id="PRO_0000287102" description="Transmembrane protein 132D">
    <location>
        <begin position="31"/>
        <end position="1097"/>
    </location>
</feature>
<feature type="topological domain" description="Extracellular" evidence="2">
    <location>
        <begin position="31"/>
        <end position="913"/>
    </location>
</feature>
<feature type="transmembrane region" description="Helical" evidence="2">
    <location>
        <begin position="914"/>
        <end position="934"/>
    </location>
</feature>
<feature type="topological domain" description="Cytoplasmic" evidence="2">
    <location>
        <begin position="935"/>
        <end position="1097"/>
    </location>
</feature>
<feature type="region of interest" description="Disordered" evidence="3">
    <location>
        <begin position="233"/>
        <end position="263"/>
    </location>
</feature>
<feature type="region of interest" description="Disordered" evidence="3">
    <location>
        <begin position="885"/>
        <end position="906"/>
    </location>
</feature>
<feature type="region of interest" description="Disordered" evidence="3">
    <location>
        <begin position="1021"/>
        <end position="1042"/>
    </location>
</feature>
<feature type="compositionally biased region" description="Basic and acidic residues" evidence="3">
    <location>
        <begin position="233"/>
        <end position="245"/>
    </location>
</feature>
<feature type="sequence conflict" description="In Ref. 1; BAC97816." evidence="5" ref="1">
    <original>GGA</original>
    <variation>RGP</variation>
    <location>
        <begin position="247"/>
        <end position="249"/>
    </location>
</feature>
<feature type="sequence conflict" description="In Ref. 1; BAC97816." evidence="5" ref="1">
    <original>V</original>
    <variation>I</variation>
    <location>
        <position position="505"/>
    </location>
</feature>
<evidence type="ECO:0000250" key="1">
    <source>
        <dbReference type="UniProtKB" id="Q9BL47"/>
    </source>
</evidence>
<evidence type="ECO:0000255" key="2"/>
<evidence type="ECO:0000256" key="3">
    <source>
        <dbReference type="SAM" id="MobiDB-lite"/>
    </source>
</evidence>
<evidence type="ECO:0000269" key="4">
    <source>
    </source>
</evidence>
<evidence type="ECO:0000305" key="5"/>
<proteinExistence type="evidence at transcript level"/>
<dbReference type="EMBL" id="AB100356">
    <property type="protein sequence ID" value="BAC97816.1"/>
    <property type="molecule type" value="mRNA"/>
</dbReference>
<dbReference type="EMBL" id="JACYVU010000033">
    <property type="status" value="NOT_ANNOTATED_CDS"/>
    <property type="molecule type" value="Genomic_DNA"/>
</dbReference>
<dbReference type="RefSeq" id="NP_942022.2">
    <property type="nucleotide sequence ID" value="NM_198727.2"/>
</dbReference>
<dbReference type="SMR" id="Q76HP2"/>
<dbReference type="FunCoup" id="Q76HP2">
    <property type="interactions" value="441"/>
</dbReference>
<dbReference type="STRING" id="10116.ENSRNOP00000011181"/>
<dbReference type="PhosphoSitePlus" id="Q76HP2"/>
<dbReference type="PaxDb" id="10116-ENSRNOP00000011181"/>
<dbReference type="Ensembl" id="ENSRNOT00000011181.7">
    <property type="protein sequence ID" value="ENSRNOP00000011181.4"/>
    <property type="gene ID" value="ENSRNOG00000008447.7"/>
</dbReference>
<dbReference type="GeneID" id="288750"/>
<dbReference type="KEGG" id="rno:288750"/>
<dbReference type="UCSC" id="RGD:735062">
    <property type="organism name" value="rat"/>
</dbReference>
<dbReference type="AGR" id="RGD:735062"/>
<dbReference type="CTD" id="121256"/>
<dbReference type="RGD" id="735062">
    <property type="gene designation" value="Tmem132d"/>
</dbReference>
<dbReference type="eggNOG" id="KOG4789">
    <property type="taxonomic scope" value="Eukaryota"/>
</dbReference>
<dbReference type="GeneTree" id="ENSGT00940000158942"/>
<dbReference type="InParanoid" id="Q76HP2"/>
<dbReference type="OMA" id="DECPTRN"/>
<dbReference type="PhylomeDB" id="Q76HP2"/>
<dbReference type="PRO" id="PR:Q76HP2"/>
<dbReference type="Proteomes" id="UP000002494">
    <property type="component" value="Chromosome 12"/>
</dbReference>
<dbReference type="Bgee" id="ENSRNOG00000008447">
    <property type="expression patterns" value="Expressed in frontal cortex and 2 other cell types or tissues"/>
</dbReference>
<dbReference type="GO" id="GO:0016020">
    <property type="term" value="C:membrane"/>
    <property type="evidence" value="ECO:0007669"/>
    <property type="project" value="UniProtKB-SubCell"/>
</dbReference>
<dbReference type="InterPro" id="IPR055422">
    <property type="entry name" value="Ig_TMEM132_2nd"/>
</dbReference>
<dbReference type="InterPro" id="IPR055423">
    <property type="entry name" value="Ig_TMEM132_5th"/>
</dbReference>
<dbReference type="InterPro" id="IPR055424">
    <property type="entry name" value="Ig_TMEM132_6th"/>
</dbReference>
<dbReference type="InterPro" id="IPR026307">
    <property type="entry name" value="TMEM132"/>
</dbReference>
<dbReference type="InterPro" id="IPR055421">
    <property type="entry name" value="TMEM132_3rd"/>
</dbReference>
<dbReference type="InterPro" id="IPR031436">
    <property type="entry name" value="TMEM132_C"/>
</dbReference>
<dbReference type="InterPro" id="IPR031437">
    <property type="entry name" value="TMEM132_M"/>
</dbReference>
<dbReference type="InterPro" id="IPR031435">
    <property type="entry name" value="TMEM132_N"/>
</dbReference>
<dbReference type="PANTHER" id="PTHR13388">
    <property type="entry name" value="DETONATOR, ISOFORM E"/>
    <property type="match status" value="1"/>
</dbReference>
<dbReference type="PANTHER" id="PTHR13388:SF2">
    <property type="entry name" value="TRANSMEMBRANE PROTEIN 132D"/>
    <property type="match status" value="1"/>
</dbReference>
<dbReference type="Pfam" id="PF23481">
    <property type="entry name" value="Ig_TMEM132_2nd"/>
    <property type="match status" value="1"/>
</dbReference>
<dbReference type="Pfam" id="PF16070">
    <property type="entry name" value="Ig_TMEM132_4th"/>
    <property type="match status" value="1"/>
</dbReference>
<dbReference type="Pfam" id="PF23486">
    <property type="entry name" value="Ig_TMEM132_5th"/>
    <property type="match status" value="1"/>
</dbReference>
<dbReference type="Pfam" id="PF23487">
    <property type="entry name" value="Ig_TMEM132_6th"/>
    <property type="match status" value="1"/>
</dbReference>
<dbReference type="Pfam" id="PF23039">
    <property type="entry name" value="TMEM132_3rd"/>
    <property type="match status" value="1"/>
</dbReference>
<dbReference type="Pfam" id="PF15706">
    <property type="entry name" value="TMEM132_C"/>
    <property type="match status" value="1"/>
</dbReference>
<dbReference type="Pfam" id="PF15705">
    <property type="entry name" value="TMEM132_N"/>
    <property type="match status" value="1"/>
</dbReference>
<sequence>MCPSEMGTLWYLWSPVLISLAALFSKVTEGRGILESIQRFSLLPTYLPVTYHINNADVSFFLKEANQDIMRNSSLQSRVESFLIYKSRRLPVLNASYGPFSLEQVVPQDLMLPSNPFGFTNTFSLNWRLKAYILQEKVYLSHPKVQVLFHIVGRDWDDHRDENLPCLRVFAFRETQEVRGSCRLGGALGLCVAQLEMLPGWFSPPSVVSGRRRPTEQPEGSPVELYYAVQPGDERGDCAKEDSRKSGGAPAGHNDVDESSPPLHRIGSVFLRETPSSPPLRELRLDSNVAVHYIPKTVRQGDVLTFPISVSRNCTEDRFTLRAKVKKGVSIVGVRASTSSLWDVKQSTEYTGKYAPAVIICQKKSAGSGKSVDDASYEVMKIDIEVEAPSDPPTTQLVTWQVEYPGEITSDLGVSKIYVSQKDLIGVIPLAMEAEILNTAILTGKTVAVPVKVISVEEDGTVQGLSDSVECRSSDEDVVKVSDRCDYVFVNGKEMKGKVNVVVTVTYQHLSSPLEMTVWVPRLPLQIEVSDMELNQIKGWRVPVVSNKRPARDSEEEDDDEKRGRGCTLQYQHAMVRVLTQFVAEAPDPGGHLAHLLGSDWQVDITELITDFMQVEEPRIAKLQGGQILTGQELGMTTIQILSPLSDAILAEKTITVLDEKVTITDLGVQLVTGLSLSLQLSPGSNRAIFATAVAQELLQRPKQEAAISCWVQFSDGSVTPLDIYDEKDFSLMATSLDEKVVSILQDPKFKWPIIAAENEGQGALVKVEMLISESCQKSKRKSVLAVGTASIKVKFGQNDANPNGSESGHLGAGLHVENINDRRSKKPFQEWGSPEGPYYSSSSMGLMEGWGSTTKRPTFPKKEGQENLLDDIILSQTMATDLTSFPDQVDLPGSNVGTEEHDPDQAAKGLSDLEIGMYALLGVFCLAILVFLINCVTFALKYRHKQVPFEEQEGLSHSHDWVGLSNRTELLGNHMNFASSQEEQITAIDRGLDFEESKLLLSSNSQNSINGQLFRSTGAMLTDDKEQKSEPPTSPTSKRKRVTFSTFSAISSDDGCPSGNTMVLSNEDDIKWVCQALDPGECPEPHSCMERLHEHV</sequence>
<organism>
    <name type="scientific">Rattus norvegicus</name>
    <name type="common">Rat</name>
    <dbReference type="NCBI Taxonomy" id="10116"/>
    <lineage>
        <taxon>Eukaryota</taxon>
        <taxon>Metazoa</taxon>
        <taxon>Chordata</taxon>
        <taxon>Craniata</taxon>
        <taxon>Vertebrata</taxon>
        <taxon>Euteleostomi</taxon>
        <taxon>Mammalia</taxon>
        <taxon>Eutheria</taxon>
        <taxon>Euarchontoglires</taxon>
        <taxon>Glires</taxon>
        <taxon>Rodentia</taxon>
        <taxon>Myomorpha</taxon>
        <taxon>Muroidea</taxon>
        <taxon>Muridae</taxon>
        <taxon>Murinae</taxon>
        <taxon>Rattus</taxon>
    </lineage>
</organism>
<accession>Q76HP2</accession>
<accession>F1M5W0</accession>
<name>T132D_RAT</name>
<comment type="function">
    <text evidence="1">Regulates neuronal morphology via inhibition of the WAVE regulatory complex (WCR), a complex that controls F-actin cytoskeletal dynamics.</text>
</comment>
<comment type="subcellular location">
    <subcellularLocation>
        <location evidence="5">Membrane</location>
        <topology evidence="5">Single-pass type I membrane protein</topology>
    </subcellularLocation>
</comment>
<comment type="tissue specificity">
    <text evidence="4">Expressed in mature oligodendrocytes in the brain.</text>
</comment>
<comment type="developmental stage">
    <text evidence="4">Expressed in the course of oligodendrocytes maturation.</text>
</comment>
<comment type="similarity">
    <text evidence="5">Belongs to the TMEM132 family.</text>
</comment>
<reference key="1">
    <citation type="journal article" date="2003" name="J. Biochem.">
        <title>Molecular cloning of a novel transmembrane protein MOLT expressed by mature oligodendrocytes.</title>
        <authorList>
            <person name="Nomoto H."/>
            <person name="Yonezawa T."/>
            <person name="Itoh K."/>
            <person name="Ono K."/>
            <person name="Yamamoto K."/>
            <person name="Oohashi T."/>
            <person name="Shiraga F."/>
            <person name="Ohtsuki H."/>
            <person name="Ninomiya Y."/>
        </authorList>
    </citation>
    <scope>NUCLEOTIDE SEQUENCE [MRNA]</scope>
    <scope>FUNCTION</scope>
    <scope>TISSUE SPECIFICITY</scope>
    <scope>DEVELOPMENTAL STAGE</scope>
</reference>
<reference key="2">
    <citation type="journal article" date="2004" name="Nature">
        <title>Genome sequence of the Brown Norway rat yields insights into mammalian evolution.</title>
        <authorList>
            <person name="Gibbs R.A."/>
            <person name="Weinstock G.M."/>
            <person name="Metzker M.L."/>
            <person name="Muzny D.M."/>
            <person name="Sodergren E.J."/>
            <person name="Scherer S."/>
            <person name="Scott G."/>
            <person name="Steffen D."/>
            <person name="Worley K.C."/>
            <person name="Burch P.E."/>
            <person name="Okwuonu G."/>
            <person name="Hines S."/>
            <person name="Lewis L."/>
            <person name="Deramo C."/>
            <person name="Delgado O."/>
            <person name="Dugan-Rocha S."/>
            <person name="Miner G."/>
            <person name="Morgan M."/>
            <person name="Hawes A."/>
            <person name="Gill R."/>
            <person name="Holt R.A."/>
            <person name="Adams M.D."/>
            <person name="Amanatides P.G."/>
            <person name="Baden-Tillson H."/>
            <person name="Barnstead M."/>
            <person name="Chin S."/>
            <person name="Evans C.A."/>
            <person name="Ferriera S."/>
            <person name="Fosler C."/>
            <person name="Glodek A."/>
            <person name="Gu Z."/>
            <person name="Jennings D."/>
            <person name="Kraft C.L."/>
            <person name="Nguyen T."/>
            <person name="Pfannkoch C.M."/>
            <person name="Sitter C."/>
            <person name="Sutton G.G."/>
            <person name="Venter J.C."/>
            <person name="Woodage T."/>
            <person name="Smith D."/>
            <person name="Lee H.-M."/>
            <person name="Gustafson E."/>
            <person name="Cahill P."/>
            <person name="Kana A."/>
            <person name="Doucette-Stamm L."/>
            <person name="Weinstock K."/>
            <person name="Fechtel K."/>
            <person name="Weiss R.B."/>
            <person name="Dunn D.M."/>
            <person name="Green E.D."/>
            <person name="Blakesley R.W."/>
            <person name="Bouffard G.G."/>
            <person name="De Jong P.J."/>
            <person name="Osoegawa K."/>
            <person name="Zhu B."/>
            <person name="Marra M."/>
            <person name="Schein J."/>
            <person name="Bosdet I."/>
            <person name="Fjell C."/>
            <person name="Jones S."/>
            <person name="Krzywinski M."/>
            <person name="Mathewson C."/>
            <person name="Siddiqui A."/>
            <person name="Wye N."/>
            <person name="McPherson J."/>
            <person name="Zhao S."/>
            <person name="Fraser C.M."/>
            <person name="Shetty J."/>
            <person name="Shatsman S."/>
            <person name="Geer K."/>
            <person name="Chen Y."/>
            <person name="Abramzon S."/>
            <person name="Nierman W.C."/>
            <person name="Havlak P.H."/>
            <person name="Chen R."/>
            <person name="Durbin K.J."/>
            <person name="Egan A."/>
            <person name="Ren Y."/>
            <person name="Song X.-Z."/>
            <person name="Li B."/>
            <person name="Liu Y."/>
            <person name="Qin X."/>
            <person name="Cawley S."/>
            <person name="Cooney A.J."/>
            <person name="D'Souza L.M."/>
            <person name="Martin K."/>
            <person name="Wu J.Q."/>
            <person name="Gonzalez-Garay M.L."/>
            <person name="Jackson A.R."/>
            <person name="Kalafus K.J."/>
            <person name="McLeod M.P."/>
            <person name="Milosavljevic A."/>
            <person name="Virk D."/>
            <person name="Volkov A."/>
            <person name="Wheeler D.A."/>
            <person name="Zhang Z."/>
            <person name="Bailey J.A."/>
            <person name="Eichler E.E."/>
            <person name="Tuzun E."/>
            <person name="Birney E."/>
            <person name="Mongin E."/>
            <person name="Ureta-Vidal A."/>
            <person name="Woodwark C."/>
            <person name="Zdobnov E."/>
            <person name="Bork P."/>
            <person name="Suyama M."/>
            <person name="Torrents D."/>
            <person name="Alexandersson M."/>
            <person name="Trask B.J."/>
            <person name="Young J.M."/>
            <person name="Huang H."/>
            <person name="Wang H."/>
            <person name="Xing H."/>
            <person name="Daniels S."/>
            <person name="Gietzen D."/>
            <person name="Schmidt J."/>
            <person name="Stevens K."/>
            <person name="Vitt U."/>
            <person name="Wingrove J."/>
            <person name="Camara F."/>
            <person name="Mar Alba M."/>
            <person name="Abril J.F."/>
            <person name="Guigo R."/>
            <person name="Smit A."/>
            <person name="Dubchak I."/>
            <person name="Rubin E.M."/>
            <person name="Couronne O."/>
            <person name="Poliakov A."/>
            <person name="Huebner N."/>
            <person name="Ganten D."/>
            <person name="Goesele C."/>
            <person name="Hummel O."/>
            <person name="Kreitler T."/>
            <person name="Lee Y.-A."/>
            <person name="Monti J."/>
            <person name="Schulz H."/>
            <person name="Zimdahl H."/>
            <person name="Himmelbauer H."/>
            <person name="Lehrach H."/>
            <person name="Jacob H.J."/>
            <person name="Bromberg S."/>
            <person name="Gullings-Handley J."/>
            <person name="Jensen-Seaman M.I."/>
            <person name="Kwitek A.E."/>
            <person name="Lazar J."/>
            <person name="Pasko D."/>
            <person name="Tonellato P.J."/>
            <person name="Twigger S."/>
            <person name="Ponting C.P."/>
            <person name="Duarte J.M."/>
            <person name="Rice S."/>
            <person name="Goodstadt L."/>
            <person name="Beatson S.A."/>
            <person name="Emes R.D."/>
            <person name="Winter E.E."/>
            <person name="Webber C."/>
            <person name="Brandt P."/>
            <person name="Nyakatura G."/>
            <person name="Adetobi M."/>
            <person name="Chiaromonte F."/>
            <person name="Elnitski L."/>
            <person name="Eswara P."/>
            <person name="Hardison R.C."/>
            <person name="Hou M."/>
            <person name="Kolbe D."/>
            <person name="Makova K."/>
            <person name="Miller W."/>
            <person name="Nekrutenko A."/>
            <person name="Riemer C."/>
            <person name="Schwartz S."/>
            <person name="Taylor J."/>
            <person name="Yang S."/>
            <person name="Zhang Y."/>
            <person name="Lindpaintner K."/>
            <person name="Andrews T.D."/>
            <person name="Caccamo M."/>
            <person name="Clamp M."/>
            <person name="Clarke L."/>
            <person name="Curwen V."/>
            <person name="Durbin R.M."/>
            <person name="Eyras E."/>
            <person name="Searle S.M."/>
            <person name="Cooper G.M."/>
            <person name="Batzoglou S."/>
            <person name="Brudno M."/>
            <person name="Sidow A."/>
            <person name="Stone E.A."/>
            <person name="Payseur B.A."/>
            <person name="Bourque G."/>
            <person name="Lopez-Otin C."/>
            <person name="Puente X.S."/>
            <person name="Chakrabarti K."/>
            <person name="Chatterji S."/>
            <person name="Dewey C."/>
            <person name="Pachter L."/>
            <person name="Bray N."/>
            <person name="Yap V.B."/>
            <person name="Caspi A."/>
            <person name="Tesler G."/>
            <person name="Pevzner P.A."/>
            <person name="Haussler D."/>
            <person name="Roskin K.M."/>
            <person name="Baertsch R."/>
            <person name="Clawson H."/>
            <person name="Furey T.S."/>
            <person name="Hinrichs A.S."/>
            <person name="Karolchik D."/>
            <person name="Kent W.J."/>
            <person name="Rosenbloom K.R."/>
            <person name="Trumbower H."/>
            <person name="Weirauch M."/>
            <person name="Cooper D.N."/>
            <person name="Stenson P.D."/>
            <person name="Ma B."/>
            <person name="Brent M."/>
            <person name="Arumugam M."/>
            <person name="Shteynberg D."/>
            <person name="Copley R.R."/>
            <person name="Taylor M.S."/>
            <person name="Riethman H."/>
            <person name="Mudunuri U."/>
            <person name="Peterson J."/>
            <person name="Guyer M."/>
            <person name="Felsenfeld A."/>
            <person name="Old S."/>
            <person name="Mockrin S."/>
            <person name="Collins F.S."/>
        </authorList>
    </citation>
    <scope>NUCLEOTIDE SEQUENCE [LARGE SCALE GENOMIC DNA]</scope>
    <source>
        <strain>Brown Norway</strain>
    </source>
</reference>
<keyword id="KW-0472">Membrane</keyword>
<keyword id="KW-1185">Reference proteome</keyword>
<keyword id="KW-0732">Signal</keyword>
<keyword id="KW-0812">Transmembrane</keyword>
<keyword id="KW-1133">Transmembrane helix</keyword>
<protein>
    <recommendedName>
        <fullName>Transmembrane protein 132D</fullName>
    </recommendedName>
    <alternativeName>
        <fullName>Mature oligodendrocytes transmembrane protein</fullName>
        <shortName>Mature OL transmembrane protein</shortName>
    </alternativeName>
</protein>